<proteinExistence type="inferred from homology"/>
<keyword id="KW-0012">Acyltransferase</keyword>
<keyword id="KW-0963">Cytoplasm</keyword>
<keyword id="KW-0408">Iron</keyword>
<keyword id="KW-0479">Metal-binding</keyword>
<keyword id="KW-1185">Reference proteome</keyword>
<keyword id="KW-0808">Transferase</keyword>
<keyword id="KW-0819">tRNA processing</keyword>
<evidence type="ECO:0000255" key="1">
    <source>
        <dbReference type="HAMAP-Rule" id="MF_01445"/>
    </source>
</evidence>
<gene>
    <name evidence="1" type="primary">tsaD</name>
    <name type="synonym">gcp</name>
    <name type="ordered locus">TERTU_3158</name>
</gene>
<sequence>MRVLGIESSCDETGVAVFDSQLGLLGHELYSQVAVHAEYGGVVPELASRDHIRKLIPLVDDILSSTHSVGAIDAVAYTAGPGLIGALLVGSCVGRAMAYAWGVPAIGVHHMEGHLLAPLLEAEPPEFPFVALLVSGGHTQLVDVKAIGDYMLLGESLDDAAGEAFDKAAKMMDLDYPGGPQVARFAEKGQPGRFKFPRPMTDRPGLDFSFSGLKTFTLNTVNEHAQANGLPDDQTCADICHAFQEAVVDTLVIKCRRALQQTGRKTLIIAGGVSANNRLREKLEQALAKIGARVYYARHEFCTDNGAMIAFAGCQRLIAGQTADLSVDVFPRWPLESLDAIQTSHASNPRTTLDNL</sequence>
<feature type="chain" id="PRO_1000215310" description="tRNA N6-adenosine threonylcarbamoyltransferase">
    <location>
        <begin position="1"/>
        <end position="356"/>
    </location>
</feature>
<feature type="binding site" evidence="1">
    <location>
        <position position="110"/>
    </location>
    <ligand>
        <name>Fe cation</name>
        <dbReference type="ChEBI" id="CHEBI:24875"/>
    </ligand>
</feature>
<feature type="binding site" evidence="1">
    <location>
        <position position="114"/>
    </location>
    <ligand>
        <name>Fe cation</name>
        <dbReference type="ChEBI" id="CHEBI:24875"/>
    </ligand>
</feature>
<feature type="binding site" evidence="1">
    <location>
        <begin position="133"/>
        <end position="137"/>
    </location>
    <ligand>
        <name>substrate</name>
    </ligand>
</feature>
<feature type="binding site" evidence="1">
    <location>
        <position position="166"/>
    </location>
    <ligand>
        <name>substrate</name>
    </ligand>
</feature>
<feature type="binding site" evidence="1">
    <location>
        <position position="179"/>
    </location>
    <ligand>
        <name>substrate</name>
    </ligand>
</feature>
<feature type="binding site" evidence="1">
    <location>
        <position position="276"/>
    </location>
    <ligand>
        <name>substrate</name>
    </ligand>
</feature>
<feature type="binding site" evidence="1">
    <location>
        <position position="304"/>
    </location>
    <ligand>
        <name>Fe cation</name>
        <dbReference type="ChEBI" id="CHEBI:24875"/>
    </ligand>
</feature>
<name>TSAD_TERTT</name>
<comment type="function">
    <text evidence="1">Required for the formation of a threonylcarbamoyl group on adenosine at position 37 (t(6)A37) in tRNAs that read codons beginning with adenine. Is involved in the transfer of the threonylcarbamoyl moiety of threonylcarbamoyl-AMP (TC-AMP) to the N6 group of A37, together with TsaE and TsaB. TsaD likely plays a direct catalytic role in this reaction.</text>
</comment>
<comment type="catalytic activity">
    <reaction evidence="1">
        <text>L-threonylcarbamoyladenylate + adenosine(37) in tRNA = N(6)-L-threonylcarbamoyladenosine(37) in tRNA + AMP + H(+)</text>
        <dbReference type="Rhea" id="RHEA:37059"/>
        <dbReference type="Rhea" id="RHEA-COMP:10162"/>
        <dbReference type="Rhea" id="RHEA-COMP:10163"/>
        <dbReference type="ChEBI" id="CHEBI:15378"/>
        <dbReference type="ChEBI" id="CHEBI:73682"/>
        <dbReference type="ChEBI" id="CHEBI:74411"/>
        <dbReference type="ChEBI" id="CHEBI:74418"/>
        <dbReference type="ChEBI" id="CHEBI:456215"/>
        <dbReference type="EC" id="2.3.1.234"/>
    </reaction>
</comment>
<comment type="cofactor">
    <cofactor evidence="1">
        <name>Fe(2+)</name>
        <dbReference type="ChEBI" id="CHEBI:29033"/>
    </cofactor>
    <text evidence="1">Binds 1 Fe(2+) ion per subunit.</text>
</comment>
<comment type="subcellular location">
    <subcellularLocation>
        <location evidence="1">Cytoplasm</location>
    </subcellularLocation>
</comment>
<comment type="similarity">
    <text evidence="1">Belongs to the KAE1 / TsaD family.</text>
</comment>
<protein>
    <recommendedName>
        <fullName evidence="1">tRNA N6-adenosine threonylcarbamoyltransferase</fullName>
        <ecNumber evidence="1">2.3.1.234</ecNumber>
    </recommendedName>
    <alternativeName>
        <fullName evidence="1">N6-L-threonylcarbamoyladenine synthase</fullName>
        <shortName evidence="1">t(6)A synthase</shortName>
    </alternativeName>
    <alternativeName>
        <fullName evidence="1">t(6)A37 threonylcarbamoyladenosine biosynthesis protein TsaD</fullName>
    </alternativeName>
    <alternativeName>
        <fullName evidence="1">tRNA threonylcarbamoyladenosine biosynthesis protein TsaD</fullName>
    </alternativeName>
</protein>
<dbReference type="EC" id="2.3.1.234" evidence="1"/>
<dbReference type="EMBL" id="CP001614">
    <property type="protein sequence ID" value="ACR11268.1"/>
    <property type="molecule type" value="Genomic_DNA"/>
</dbReference>
<dbReference type="RefSeq" id="WP_015817380.1">
    <property type="nucleotide sequence ID" value="NC_012997.1"/>
</dbReference>
<dbReference type="SMR" id="C5BPQ9"/>
<dbReference type="STRING" id="377629.TERTU_3158"/>
<dbReference type="KEGG" id="ttu:TERTU_3158"/>
<dbReference type="eggNOG" id="COG0533">
    <property type="taxonomic scope" value="Bacteria"/>
</dbReference>
<dbReference type="HOGENOM" id="CLU_023208_0_2_6"/>
<dbReference type="OrthoDB" id="9806197at2"/>
<dbReference type="Proteomes" id="UP000009080">
    <property type="component" value="Chromosome"/>
</dbReference>
<dbReference type="GO" id="GO:0005737">
    <property type="term" value="C:cytoplasm"/>
    <property type="evidence" value="ECO:0007669"/>
    <property type="project" value="UniProtKB-SubCell"/>
</dbReference>
<dbReference type="GO" id="GO:0005506">
    <property type="term" value="F:iron ion binding"/>
    <property type="evidence" value="ECO:0007669"/>
    <property type="project" value="UniProtKB-UniRule"/>
</dbReference>
<dbReference type="GO" id="GO:0061711">
    <property type="term" value="F:N(6)-L-threonylcarbamoyladenine synthase activity"/>
    <property type="evidence" value="ECO:0007669"/>
    <property type="project" value="UniProtKB-EC"/>
</dbReference>
<dbReference type="GO" id="GO:0002949">
    <property type="term" value="P:tRNA threonylcarbamoyladenosine modification"/>
    <property type="evidence" value="ECO:0007669"/>
    <property type="project" value="UniProtKB-UniRule"/>
</dbReference>
<dbReference type="CDD" id="cd24133">
    <property type="entry name" value="ASKHA_NBD_TsaD_bac"/>
    <property type="match status" value="1"/>
</dbReference>
<dbReference type="FunFam" id="3.30.420.40:FF:000012">
    <property type="entry name" value="tRNA N6-adenosine threonylcarbamoyltransferase"/>
    <property type="match status" value="1"/>
</dbReference>
<dbReference type="FunFam" id="3.30.420.40:FF:000031">
    <property type="entry name" value="tRNA N6-adenosine threonylcarbamoyltransferase"/>
    <property type="match status" value="1"/>
</dbReference>
<dbReference type="Gene3D" id="3.30.420.40">
    <property type="match status" value="2"/>
</dbReference>
<dbReference type="HAMAP" id="MF_01445">
    <property type="entry name" value="TsaD"/>
    <property type="match status" value="1"/>
</dbReference>
<dbReference type="InterPro" id="IPR043129">
    <property type="entry name" value="ATPase_NBD"/>
</dbReference>
<dbReference type="InterPro" id="IPR000905">
    <property type="entry name" value="Gcp-like_dom"/>
</dbReference>
<dbReference type="InterPro" id="IPR017861">
    <property type="entry name" value="KAE1/TsaD"/>
</dbReference>
<dbReference type="InterPro" id="IPR017860">
    <property type="entry name" value="Peptidase_M22_CS"/>
</dbReference>
<dbReference type="InterPro" id="IPR022450">
    <property type="entry name" value="TsaD"/>
</dbReference>
<dbReference type="NCBIfam" id="TIGR00329">
    <property type="entry name" value="gcp_kae1"/>
    <property type="match status" value="1"/>
</dbReference>
<dbReference type="NCBIfam" id="TIGR03723">
    <property type="entry name" value="T6A_TsaD_YgjD"/>
    <property type="match status" value="1"/>
</dbReference>
<dbReference type="PANTHER" id="PTHR11735">
    <property type="entry name" value="TRNA N6-ADENOSINE THREONYLCARBAMOYLTRANSFERASE"/>
    <property type="match status" value="1"/>
</dbReference>
<dbReference type="PANTHER" id="PTHR11735:SF6">
    <property type="entry name" value="TRNA N6-ADENOSINE THREONYLCARBAMOYLTRANSFERASE, MITOCHONDRIAL"/>
    <property type="match status" value="1"/>
</dbReference>
<dbReference type="Pfam" id="PF00814">
    <property type="entry name" value="TsaD"/>
    <property type="match status" value="1"/>
</dbReference>
<dbReference type="PRINTS" id="PR00789">
    <property type="entry name" value="OSIALOPTASE"/>
</dbReference>
<dbReference type="SUPFAM" id="SSF53067">
    <property type="entry name" value="Actin-like ATPase domain"/>
    <property type="match status" value="2"/>
</dbReference>
<dbReference type="PROSITE" id="PS01016">
    <property type="entry name" value="GLYCOPROTEASE"/>
    <property type="match status" value="1"/>
</dbReference>
<reference key="1">
    <citation type="journal article" date="2009" name="PLoS ONE">
        <title>The complete genome of Teredinibacter turnerae T7901: an intracellular endosymbiont of marine wood-boring bivalves (shipworms).</title>
        <authorList>
            <person name="Yang J.C."/>
            <person name="Madupu R."/>
            <person name="Durkin A.S."/>
            <person name="Ekborg N.A."/>
            <person name="Pedamallu C.S."/>
            <person name="Hostetler J.B."/>
            <person name="Radune D."/>
            <person name="Toms B.S."/>
            <person name="Henrissat B."/>
            <person name="Coutinho P.M."/>
            <person name="Schwarz S."/>
            <person name="Field L."/>
            <person name="Trindade-Silva A.E."/>
            <person name="Soares C.A.G."/>
            <person name="Elshahawi S."/>
            <person name="Hanora A."/>
            <person name="Schmidt E.W."/>
            <person name="Haygood M.G."/>
            <person name="Posfai J."/>
            <person name="Benner J."/>
            <person name="Madinger C."/>
            <person name="Nove J."/>
            <person name="Anton B."/>
            <person name="Chaudhary K."/>
            <person name="Foster J."/>
            <person name="Holman A."/>
            <person name="Kumar S."/>
            <person name="Lessard P.A."/>
            <person name="Luyten Y.A."/>
            <person name="Slatko B."/>
            <person name="Wood N."/>
            <person name="Wu B."/>
            <person name="Teplitski M."/>
            <person name="Mougous J.D."/>
            <person name="Ward N."/>
            <person name="Eisen J.A."/>
            <person name="Badger J.H."/>
            <person name="Distel D.L."/>
        </authorList>
    </citation>
    <scope>NUCLEOTIDE SEQUENCE [LARGE SCALE GENOMIC DNA]</scope>
    <source>
        <strain>ATCC 39867 / T7901</strain>
    </source>
</reference>
<accession>C5BPQ9</accession>
<organism>
    <name type="scientific">Teredinibacter turnerae (strain ATCC 39867 / T7901)</name>
    <dbReference type="NCBI Taxonomy" id="377629"/>
    <lineage>
        <taxon>Bacteria</taxon>
        <taxon>Pseudomonadati</taxon>
        <taxon>Pseudomonadota</taxon>
        <taxon>Gammaproteobacteria</taxon>
        <taxon>Cellvibrionales</taxon>
        <taxon>Cellvibrionaceae</taxon>
        <taxon>Teredinibacter</taxon>
    </lineage>
</organism>